<gene>
    <name evidence="1" type="primary">bchB</name>
    <name type="ordered locus">Rru_A0622</name>
</gene>
<evidence type="ECO:0000255" key="1">
    <source>
        <dbReference type="HAMAP-Rule" id="MF_00353"/>
    </source>
</evidence>
<evidence type="ECO:0000256" key="2">
    <source>
        <dbReference type="SAM" id="MobiDB-lite"/>
    </source>
</evidence>
<protein>
    <recommendedName>
        <fullName evidence="1">Light-independent protochlorophyllide reductase subunit B</fullName>
        <shortName evidence="1">DPOR subunit B</shortName>
        <shortName evidence="1">LI-POR subunit B</shortName>
        <ecNumber evidence="1">1.3.7.7</ecNumber>
    </recommendedName>
</protein>
<accession>Q2RWR9</accession>
<organism>
    <name type="scientific">Rhodospirillum rubrum (strain ATCC 11170 / ATH 1.1.1 / DSM 467 / LMG 4362 / NCIMB 8255 / S1)</name>
    <dbReference type="NCBI Taxonomy" id="269796"/>
    <lineage>
        <taxon>Bacteria</taxon>
        <taxon>Pseudomonadati</taxon>
        <taxon>Pseudomonadota</taxon>
        <taxon>Alphaproteobacteria</taxon>
        <taxon>Rhodospirillales</taxon>
        <taxon>Rhodospirillaceae</taxon>
        <taxon>Rhodospirillum</taxon>
    </lineage>
</organism>
<feature type="chain" id="PRO_0000324043" description="Light-independent protochlorophyllide reductase subunit B">
    <location>
        <begin position="1"/>
        <end position="546"/>
    </location>
</feature>
<feature type="region of interest" description="Disordered" evidence="2">
    <location>
        <begin position="443"/>
        <end position="501"/>
    </location>
</feature>
<feature type="active site" description="Proton donor" evidence="1">
    <location>
        <position position="287"/>
    </location>
</feature>
<feature type="binding site" evidence="1">
    <location>
        <position position="36"/>
    </location>
    <ligand>
        <name>[4Fe-4S] cluster</name>
        <dbReference type="ChEBI" id="CHEBI:49883"/>
        <note>ligand shared with heterodimeric partner</note>
    </ligand>
</feature>
<feature type="binding site" evidence="1">
    <location>
        <begin position="422"/>
        <end position="423"/>
    </location>
    <ligand>
        <name>substrate</name>
    </ligand>
</feature>
<comment type="function">
    <text evidence="1">Component of the dark-operative protochlorophyllide reductase (DPOR) that uses Mg-ATP and reduced ferredoxin to reduce ring D of protochlorophyllide (Pchlide) to form chlorophyllide a (Chlide). This reaction is light-independent. The NB-protein (BchN-BchB) is the catalytic component of the complex.</text>
</comment>
<comment type="catalytic activity">
    <reaction evidence="1">
        <text>chlorophyllide a + oxidized 2[4Fe-4S]-[ferredoxin] + 2 ADP + 2 phosphate = protochlorophyllide a + reduced 2[4Fe-4S]-[ferredoxin] + 2 ATP + 2 H2O</text>
        <dbReference type="Rhea" id="RHEA:28202"/>
        <dbReference type="Rhea" id="RHEA-COMP:10002"/>
        <dbReference type="Rhea" id="RHEA-COMP:10004"/>
        <dbReference type="ChEBI" id="CHEBI:15377"/>
        <dbReference type="ChEBI" id="CHEBI:30616"/>
        <dbReference type="ChEBI" id="CHEBI:33722"/>
        <dbReference type="ChEBI" id="CHEBI:33723"/>
        <dbReference type="ChEBI" id="CHEBI:43474"/>
        <dbReference type="ChEBI" id="CHEBI:83348"/>
        <dbReference type="ChEBI" id="CHEBI:83350"/>
        <dbReference type="ChEBI" id="CHEBI:456216"/>
        <dbReference type="EC" id="1.3.7.7"/>
    </reaction>
</comment>
<comment type="cofactor">
    <cofactor evidence="1">
        <name>[4Fe-4S] cluster</name>
        <dbReference type="ChEBI" id="CHEBI:49883"/>
    </cofactor>
    <text evidence="1">Binds 1 [4Fe-4S] cluster per heterodimer. The cluster is bound at the heterodimer interface by residues from both subunits.</text>
</comment>
<comment type="pathway">
    <text evidence="1">Porphyrin-containing compound metabolism; bacteriochlorophyll biosynthesis (light-independent).</text>
</comment>
<comment type="subunit">
    <text evidence="1">Protochlorophyllide reductase is composed of three subunits; BchL, BchN and BchB. Forms a heterotetramer of two BchB and two BchN subunits.</text>
</comment>
<comment type="similarity">
    <text evidence="1">Belongs to the ChlB/BchB/BchZ family.</text>
</comment>
<keyword id="KW-0004">4Fe-4S</keyword>
<keyword id="KW-0067">ATP-binding</keyword>
<keyword id="KW-0077">Bacteriochlorophyll biosynthesis</keyword>
<keyword id="KW-0149">Chlorophyll biosynthesis</keyword>
<keyword id="KW-0408">Iron</keyword>
<keyword id="KW-0411">Iron-sulfur</keyword>
<keyword id="KW-0479">Metal-binding</keyword>
<keyword id="KW-0547">Nucleotide-binding</keyword>
<keyword id="KW-0560">Oxidoreductase</keyword>
<keyword id="KW-0602">Photosynthesis</keyword>
<keyword id="KW-1185">Reference proteome</keyword>
<dbReference type="EC" id="1.3.7.7" evidence="1"/>
<dbReference type="EMBL" id="CP000230">
    <property type="protein sequence ID" value="ABC21426.1"/>
    <property type="molecule type" value="Genomic_DNA"/>
</dbReference>
<dbReference type="RefSeq" id="WP_011388380.1">
    <property type="nucleotide sequence ID" value="NC_007643.1"/>
</dbReference>
<dbReference type="RefSeq" id="YP_425713.1">
    <property type="nucleotide sequence ID" value="NC_007643.1"/>
</dbReference>
<dbReference type="SMR" id="Q2RWR9"/>
<dbReference type="STRING" id="269796.Rru_A0622"/>
<dbReference type="EnsemblBacteria" id="ABC21426">
    <property type="protein sequence ID" value="ABC21426"/>
    <property type="gene ID" value="Rru_A0622"/>
</dbReference>
<dbReference type="KEGG" id="rru:Rru_A0622"/>
<dbReference type="PATRIC" id="fig|269796.9.peg.677"/>
<dbReference type="eggNOG" id="COG2710">
    <property type="taxonomic scope" value="Bacteria"/>
</dbReference>
<dbReference type="HOGENOM" id="CLU_025470_0_0_5"/>
<dbReference type="PhylomeDB" id="Q2RWR9"/>
<dbReference type="UniPathway" id="UPA00671"/>
<dbReference type="Proteomes" id="UP000001929">
    <property type="component" value="Chromosome"/>
</dbReference>
<dbReference type="GO" id="GO:0051539">
    <property type="term" value="F:4 iron, 4 sulfur cluster binding"/>
    <property type="evidence" value="ECO:0007669"/>
    <property type="project" value="UniProtKB-UniRule"/>
</dbReference>
<dbReference type="GO" id="GO:0005524">
    <property type="term" value="F:ATP binding"/>
    <property type="evidence" value="ECO:0007669"/>
    <property type="project" value="UniProtKB-UniRule"/>
</dbReference>
<dbReference type="GO" id="GO:0046872">
    <property type="term" value="F:metal ion binding"/>
    <property type="evidence" value="ECO:0007669"/>
    <property type="project" value="UniProtKB-KW"/>
</dbReference>
<dbReference type="GO" id="GO:0016730">
    <property type="term" value="F:oxidoreductase activity, acting on iron-sulfur proteins as donors"/>
    <property type="evidence" value="ECO:0007669"/>
    <property type="project" value="InterPro"/>
</dbReference>
<dbReference type="GO" id="GO:0016636">
    <property type="term" value="F:oxidoreductase activity, acting on the CH-CH group of donors, iron-sulfur protein as acceptor"/>
    <property type="evidence" value="ECO:0007669"/>
    <property type="project" value="UniProtKB-UniRule"/>
</dbReference>
<dbReference type="GO" id="GO:0036070">
    <property type="term" value="P:light-independent bacteriochlorophyll biosynthetic process"/>
    <property type="evidence" value="ECO:0007669"/>
    <property type="project" value="UniProtKB-UniRule"/>
</dbReference>
<dbReference type="GO" id="GO:0019685">
    <property type="term" value="P:photosynthesis, dark reaction"/>
    <property type="evidence" value="ECO:0007669"/>
    <property type="project" value="InterPro"/>
</dbReference>
<dbReference type="Gene3D" id="1.20.89.20">
    <property type="match status" value="1"/>
</dbReference>
<dbReference type="Gene3D" id="3.40.50.1980">
    <property type="entry name" value="Nitrogenase molybdenum iron protein domain"/>
    <property type="match status" value="3"/>
</dbReference>
<dbReference type="Gene3D" id="1.10.8.550">
    <property type="entry name" value="Proto-chlorophyllide reductase 57 kD subunit B"/>
    <property type="match status" value="1"/>
</dbReference>
<dbReference type="HAMAP" id="MF_00353">
    <property type="entry name" value="ChlB_BchB"/>
    <property type="match status" value="1"/>
</dbReference>
<dbReference type="InterPro" id="IPR050152">
    <property type="entry name" value="ChlB/BchB/BchZ"/>
</dbReference>
<dbReference type="InterPro" id="IPR013580">
    <property type="entry name" value="LI-POR_suB-like_C"/>
</dbReference>
<dbReference type="InterPro" id="IPR000510">
    <property type="entry name" value="Nase/OxRdtase_comp1"/>
</dbReference>
<dbReference type="InterPro" id="IPR042298">
    <property type="entry name" value="P-CP_red_C"/>
</dbReference>
<dbReference type="InterPro" id="IPR005969">
    <property type="entry name" value="Protochl_reductB"/>
</dbReference>
<dbReference type="InterPro" id="IPR016209">
    <property type="entry name" value="Protochlorophyllide_Rdtase"/>
</dbReference>
<dbReference type="NCBIfam" id="TIGR01278">
    <property type="entry name" value="DPOR_BchB"/>
    <property type="match status" value="1"/>
</dbReference>
<dbReference type="PANTHER" id="PTHR33712">
    <property type="entry name" value="LIGHT-INDEPENDENT PROTOCHLOROPHYLLIDE REDUCTASE SUBUNIT B"/>
    <property type="match status" value="1"/>
</dbReference>
<dbReference type="PANTHER" id="PTHR33712:SF7">
    <property type="entry name" value="LIGHT-INDEPENDENT PROTOCHLOROPHYLLIDE REDUCTASE SUBUNIT B"/>
    <property type="match status" value="1"/>
</dbReference>
<dbReference type="Pfam" id="PF00148">
    <property type="entry name" value="Oxidored_nitro"/>
    <property type="match status" value="1"/>
</dbReference>
<dbReference type="Pfam" id="PF08369">
    <property type="entry name" value="PCP_red"/>
    <property type="match status" value="1"/>
</dbReference>
<dbReference type="PIRSF" id="PIRSF000163">
    <property type="entry name" value="PCP_ChlB"/>
    <property type="match status" value="1"/>
</dbReference>
<dbReference type="SUPFAM" id="SSF53807">
    <property type="entry name" value="Helical backbone' metal receptor"/>
    <property type="match status" value="1"/>
</dbReference>
<reference key="1">
    <citation type="journal article" date="2011" name="Stand. Genomic Sci.">
        <title>Complete genome sequence of Rhodospirillum rubrum type strain (S1).</title>
        <authorList>
            <person name="Munk A.C."/>
            <person name="Copeland A."/>
            <person name="Lucas S."/>
            <person name="Lapidus A."/>
            <person name="Del Rio T.G."/>
            <person name="Barry K."/>
            <person name="Detter J.C."/>
            <person name="Hammon N."/>
            <person name="Israni S."/>
            <person name="Pitluck S."/>
            <person name="Brettin T."/>
            <person name="Bruce D."/>
            <person name="Han C."/>
            <person name="Tapia R."/>
            <person name="Gilna P."/>
            <person name="Schmutz J."/>
            <person name="Larimer F."/>
            <person name="Land M."/>
            <person name="Kyrpides N.C."/>
            <person name="Mavromatis K."/>
            <person name="Richardson P."/>
            <person name="Rohde M."/>
            <person name="Goeker M."/>
            <person name="Klenk H.P."/>
            <person name="Zhang Y."/>
            <person name="Roberts G.P."/>
            <person name="Reslewic S."/>
            <person name="Schwartz D.C."/>
        </authorList>
    </citation>
    <scope>NUCLEOTIDE SEQUENCE [LARGE SCALE GENOMIC DNA]</scope>
    <source>
        <strain>ATCC 11170 / ATH 1.1.1 / DSM 467 / LMG 4362 / NCIMB 8255 / S1</strain>
    </source>
</reference>
<sequence>MRLTVWTYEGPPQVGAMRVATAMRGVHYVVHAPQGDSYADLLFTMIERRPGRPAVSYTSFQARDLGTDTAALFKTAAADAVARFQPEALLVGSSCTGELIQDDPGGLAKALGLSIPVIPLELPSYQRKENWGAAETFYRLVRTMAGPAAPAPGTPRAPRPAGQRPRCNLLGPTALGFRHRDDVQAVVALLGRMGVDVAVVAPLGASPADLARLGEADFNVVLYPEIADTAVRWLERAFGQPSVRTVPIGVGATRAFIAEVAAVAGVDPAPALAEESLRLPWWSRSVDSTYLTGKRVFIFGDATHAVAAARVATEEFGFEVVGLGTYAREYARELRACAGALGLEALITDDYLDVEAAIADAHPDLVLGTQMERHIAKRLGVPCAVISAPVHVQDFPARTAPQMGFDGANVLFDTWVHPLMMGLEEHLLMMFRDDFEFHGDAAPSHLSAHRPTGEAVGDAVGEPPAAPRDQAAPAATLDGSAAQSDPARTTPPGAPSWEDSAEKELRKVPFFVRGKARRNTERFAAERGLASISVETLYDAKAHFGR</sequence>
<name>BCHB_RHORT</name>
<proteinExistence type="inferred from homology"/>